<proteinExistence type="evidence at protein level"/>
<gene>
    <name type="primary">tuf</name>
</gene>
<reference key="1">
    <citation type="journal article" date="2002" name="Proteomics">
        <title>High pressure effects step-wise altered protein expression in Lactobacillus sanfranciscensis.</title>
        <authorList>
            <person name="Drews O."/>
            <person name="Weiss W."/>
            <person name="Reil G."/>
            <person name="Parlar H."/>
            <person name="Wait R."/>
            <person name="Goerg A."/>
        </authorList>
    </citation>
    <scope>PROTEIN SEQUENCE OF 1-9; 57-69 AND 84-97</scope>
    <scope>INDUCTION</scope>
    <source>
        <strain>ATCC 27651 / DSM 20451 / JCM 5668 / KCTC 3205 / NCIMB 702811 / NRRL B-3934 / L-12</strain>
    </source>
</reference>
<reference key="2">
    <citation type="journal article" date="2005" name="Arch. Microbiol.">
        <title>Transcriptional response reveals translation machinery as target for high pressure in Lactobacillus sanfranciscensis.</title>
        <authorList>
            <person name="Pavlovic M."/>
            <person name="Hoermann S."/>
            <person name="Vogel R.F."/>
            <person name="Ehrmann M.A."/>
        </authorList>
    </citation>
    <scope>NUCLEOTIDE SEQUENCE [GENOMIC DNA] OF 10-147</scope>
    <scope>INDUCTION</scope>
    <source>
        <strain>ATCC 27651 / DSM 20451 / JCM 5668 / KCTC 3205 / NCIMB 702811 / NRRL B-3934 / L-12</strain>
    </source>
</reference>
<sequence>DLLSEYGYDLMDTVDEYIPTPERDERKPFMMPIEDVFTITGRGTVASGRIERGVIKLGDEVEIVGLVEDVLKTTVTGIEMFRKTLDEGQAGDNIGALLRGVNREQVVRGQVLAAPGSVQTHEKFSAEVYIMSKEEGGRHTPFFSNYR</sequence>
<comment type="function">
    <text>This protein promotes the GTP-dependent binding of aminoacyl-tRNA to the A-site of ribosomes during protein biosynthesis.</text>
</comment>
<comment type="subunit">
    <text evidence="1">Monomer.</text>
</comment>
<comment type="subcellular location">
    <subcellularLocation>
        <location>Cytoplasm</location>
    </subcellularLocation>
</comment>
<comment type="induction">
    <text evidence="2 3">By elevated hydrostatic pressure.</text>
</comment>
<comment type="similarity">
    <text evidence="4">Belongs to the GTP-binding elongation factor family. EF-Tu/EF-1A subfamily.</text>
</comment>
<organism>
    <name type="scientific">Fructilactobacillus sanfranciscensis</name>
    <name type="common">Lactobacillus sanfranciscensis</name>
    <dbReference type="NCBI Taxonomy" id="1625"/>
    <lineage>
        <taxon>Bacteria</taxon>
        <taxon>Bacillati</taxon>
        <taxon>Bacillota</taxon>
        <taxon>Bacilli</taxon>
        <taxon>Lactobacillales</taxon>
        <taxon>Lactobacillaceae</taxon>
        <taxon>Fructilactobacillus</taxon>
    </lineage>
</organism>
<keyword id="KW-0963">Cytoplasm</keyword>
<keyword id="KW-0903">Direct protein sequencing</keyword>
<keyword id="KW-0251">Elongation factor</keyword>
<keyword id="KW-0342">GTP-binding</keyword>
<keyword id="KW-0547">Nucleotide-binding</keyword>
<keyword id="KW-0648">Protein biosynthesis</keyword>
<accession>Q2YEJ1</accession>
<accession>P83541</accession>
<dbReference type="EMBL" id="AY912112">
    <property type="protein sequence ID" value="AAX93321.1"/>
    <property type="molecule type" value="Genomic_DNA"/>
</dbReference>
<dbReference type="SMR" id="Q2YEJ1"/>
<dbReference type="GO" id="GO:0005829">
    <property type="term" value="C:cytosol"/>
    <property type="evidence" value="ECO:0007669"/>
    <property type="project" value="TreeGrafter"/>
</dbReference>
<dbReference type="GO" id="GO:0005525">
    <property type="term" value="F:GTP binding"/>
    <property type="evidence" value="ECO:0007669"/>
    <property type="project" value="UniProtKB-KW"/>
</dbReference>
<dbReference type="GO" id="GO:0003746">
    <property type="term" value="F:translation elongation factor activity"/>
    <property type="evidence" value="ECO:0007669"/>
    <property type="project" value="UniProtKB-KW"/>
</dbReference>
<dbReference type="CDD" id="cd03697">
    <property type="entry name" value="EFTU_II"/>
    <property type="match status" value="1"/>
</dbReference>
<dbReference type="FunFam" id="2.40.30.10:FF:000001">
    <property type="entry name" value="Elongation factor Tu"/>
    <property type="match status" value="1"/>
</dbReference>
<dbReference type="Gene3D" id="2.40.30.10">
    <property type="entry name" value="Translation factors"/>
    <property type="match status" value="1"/>
</dbReference>
<dbReference type="InterPro" id="IPR050055">
    <property type="entry name" value="EF-Tu_GTPase"/>
</dbReference>
<dbReference type="InterPro" id="IPR004161">
    <property type="entry name" value="EFTu-like_2"/>
</dbReference>
<dbReference type="InterPro" id="IPR033720">
    <property type="entry name" value="EFTU_2"/>
</dbReference>
<dbReference type="InterPro" id="IPR009000">
    <property type="entry name" value="Transl_B-barrel_sf"/>
</dbReference>
<dbReference type="InterPro" id="IPR009001">
    <property type="entry name" value="Transl_elong_EF1A/Init_IF2_C"/>
</dbReference>
<dbReference type="InterPro" id="IPR004160">
    <property type="entry name" value="Transl_elong_EFTu/EF1A_C"/>
</dbReference>
<dbReference type="PANTHER" id="PTHR43721:SF22">
    <property type="entry name" value="ELONGATION FACTOR TU, MITOCHONDRIAL"/>
    <property type="match status" value="1"/>
</dbReference>
<dbReference type="PANTHER" id="PTHR43721">
    <property type="entry name" value="ELONGATION FACTOR TU-RELATED"/>
    <property type="match status" value="1"/>
</dbReference>
<dbReference type="Pfam" id="PF03144">
    <property type="entry name" value="GTP_EFTU_D2"/>
    <property type="match status" value="1"/>
</dbReference>
<dbReference type="Pfam" id="PF03143">
    <property type="entry name" value="GTP_EFTU_D3"/>
    <property type="match status" value="1"/>
</dbReference>
<dbReference type="SUPFAM" id="SSF50465">
    <property type="entry name" value="EF-Tu/eEF-1alpha/eIF2-gamma C-terminal domain"/>
    <property type="match status" value="1"/>
</dbReference>
<dbReference type="SUPFAM" id="SSF50447">
    <property type="entry name" value="Translation proteins"/>
    <property type="match status" value="1"/>
</dbReference>
<evidence type="ECO:0000250" key="1"/>
<evidence type="ECO:0000269" key="2">
    <source>
    </source>
</evidence>
<evidence type="ECO:0000269" key="3">
    <source>
    </source>
</evidence>
<evidence type="ECO:0000305" key="4"/>
<name>EFTU_FRUSA</name>
<feature type="chain" id="PRO_0000285982" description="Elongation factor Tu">
    <location>
        <begin position="1" status="less than"/>
        <end position="147" status="greater than"/>
    </location>
</feature>
<feature type="sequence conflict" description="In Ref. 1; AA sequence." evidence="4" ref="1">
    <original>LG</original>
    <variation>VA</variation>
    <location>
        <begin position="57"/>
        <end position="58"/>
    </location>
</feature>
<feature type="sequence conflict" description="In Ref. 1; AA sequence." evidence="4" ref="1">
    <original>I</original>
    <variation>L</variation>
    <location>
        <position position="63"/>
    </location>
</feature>
<feature type="sequence conflict" description="In Ref. 1; AA sequence." evidence="4" ref="1">
    <original>IGAL</original>
    <variation>LVDQ</variation>
    <location>
        <begin position="94"/>
        <end position="97"/>
    </location>
</feature>
<feature type="non-consecutive residues" evidence="4">
    <location>
        <begin position="9"/>
        <end position="10"/>
    </location>
</feature>
<feature type="non-terminal residue">
    <location>
        <position position="1"/>
    </location>
</feature>
<feature type="non-terminal residue">
    <location>
        <position position="147"/>
    </location>
</feature>
<protein>
    <recommendedName>
        <fullName>Elongation factor Tu</fullName>
    </recommendedName>
</protein>